<gene>
    <name evidence="1" type="primary">purM</name>
    <name type="ordered locus">MGAS10270_Spy0026</name>
</gene>
<sequence>MSEKNAYAKSGVDVEAGYEVVERIKKHVARTERAGVMGVLGGFGGMFDLSQTGVKEPVLVSGTDGVGTKLMLAIKYDKHDTIGQDCVAMCVNDIIAAGAEPLYFLDYIATGKNNPVKLEEVVSGVAEGCVQAGVALIGGETAEMPGMYGEDDYDLAGFAVGVAEKSQLIDGSKVKEGDILLGLASSGIHSNGYSLVRRVFADYTGKELLPELEGKQLKDVLLEPTRIYVRAALPLIKEELVNGIGHITGGGFIENVPRMFADDLTAEIDEDKVPVLPIFKALEKYGDIKHEEMFEIFNMGVGLMLAVSPENVNRVKELLDEPVYEIGRIIKKADDSVVIK</sequence>
<reference key="1">
    <citation type="journal article" date="2006" name="Proc. Natl. Acad. Sci. U.S.A.">
        <title>Molecular genetic anatomy of inter- and intraserotype variation in the human bacterial pathogen group A Streptococcus.</title>
        <authorList>
            <person name="Beres S.B."/>
            <person name="Richter E.W."/>
            <person name="Nagiec M.J."/>
            <person name="Sumby P."/>
            <person name="Porcella S.F."/>
            <person name="DeLeo F.R."/>
            <person name="Musser J.M."/>
        </authorList>
    </citation>
    <scope>NUCLEOTIDE SEQUENCE [LARGE SCALE GENOMIC DNA]</scope>
    <source>
        <strain>MGAS10270</strain>
    </source>
</reference>
<evidence type="ECO:0000255" key="1">
    <source>
        <dbReference type="HAMAP-Rule" id="MF_00741"/>
    </source>
</evidence>
<protein>
    <recommendedName>
        <fullName evidence="1">Phosphoribosylformylglycinamidine cyclo-ligase</fullName>
        <ecNumber evidence="1">6.3.3.1</ecNumber>
    </recommendedName>
    <alternativeName>
        <fullName evidence="1">AIR synthase</fullName>
    </alternativeName>
    <alternativeName>
        <fullName evidence="1">AIRS</fullName>
    </alternativeName>
    <alternativeName>
        <fullName evidence="1">Phosphoribosyl-aminoimidazole synthetase</fullName>
    </alternativeName>
</protein>
<feature type="chain" id="PRO_0000258415" description="Phosphoribosylformylglycinamidine cyclo-ligase">
    <location>
        <begin position="1"/>
        <end position="340"/>
    </location>
</feature>
<proteinExistence type="inferred from homology"/>
<organism>
    <name type="scientific">Streptococcus pyogenes serotype M2 (strain MGAS10270)</name>
    <dbReference type="NCBI Taxonomy" id="370552"/>
    <lineage>
        <taxon>Bacteria</taxon>
        <taxon>Bacillati</taxon>
        <taxon>Bacillota</taxon>
        <taxon>Bacilli</taxon>
        <taxon>Lactobacillales</taxon>
        <taxon>Streptococcaceae</taxon>
        <taxon>Streptococcus</taxon>
    </lineage>
</organism>
<keyword id="KW-0067">ATP-binding</keyword>
<keyword id="KW-0963">Cytoplasm</keyword>
<keyword id="KW-0436">Ligase</keyword>
<keyword id="KW-0547">Nucleotide-binding</keyword>
<keyword id="KW-0658">Purine biosynthesis</keyword>
<name>PUR5_STRPD</name>
<dbReference type="EC" id="6.3.3.1" evidence="1"/>
<dbReference type="EMBL" id="CP000260">
    <property type="protein sequence ID" value="ABF33091.1"/>
    <property type="molecule type" value="Genomic_DNA"/>
</dbReference>
<dbReference type="SMR" id="Q1JJ82"/>
<dbReference type="KEGG" id="sph:MGAS10270_Spy0026"/>
<dbReference type="HOGENOM" id="CLU_047116_0_0_9"/>
<dbReference type="UniPathway" id="UPA00074">
    <property type="reaction ID" value="UER00129"/>
</dbReference>
<dbReference type="Proteomes" id="UP000002436">
    <property type="component" value="Chromosome"/>
</dbReference>
<dbReference type="GO" id="GO:0005829">
    <property type="term" value="C:cytosol"/>
    <property type="evidence" value="ECO:0007669"/>
    <property type="project" value="TreeGrafter"/>
</dbReference>
<dbReference type="GO" id="GO:0005524">
    <property type="term" value="F:ATP binding"/>
    <property type="evidence" value="ECO:0007669"/>
    <property type="project" value="UniProtKB-KW"/>
</dbReference>
<dbReference type="GO" id="GO:0004637">
    <property type="term" value="F:phosphoribosylamine-glycine ligase activity"/>
    <property type="evidence" value="ECO:0007669"/>
    <property type="project" value="TreeGrafter"/>
</dbReference>
<dbReference type="GO" id="GO:0004641">
    <property type="term" value="F:phosphoribosylformylglycinamidine cyclo-ligase activity"/>
    <property type="evidence" value="ECO:0007669"/>
    <property type="project" value="UniProtKB-UniRule"/>
</dbReference>
<dbReference type="GO" id="GO:0006189">
    <property type="term" value="P:'de novo' IMP biosynthetic process"/>
    <property type="evidence" value="ECO:0007669"/>
    <property type="project" value="UniProtKB-UniRule"/>
</dbReference>
<dbReference type="GO" id="GO:0046084">
    <property type="term" value="P:adenine biosynthetic process"/>
    <property type="evidence" value="ECO:0007669"/>
    <property type="project" value="TreeGrafter"/>
</dbReference>
<dbReference type="CDD" id="cd02196">
    <property type="entry name" value="PurM"/>
    <property type="match status" value="1"/>
</dbReference>
<dbReference type="FunFam" id="3.30.1330.10:FF:000001">
    <property type="entry name" value="Phosphoribosylformylglycinamidine cyclo-ligase"/>
    <property type="match status" value="1"/>
</dbReference>
<dbReference type="FunFam" id="3.90.650.10:FF:000011">
    <property type="entry name" value="Phosphoribosylformylglycinamidine cyclo-ligase"/>
    <property type="match status" value="1"/>
</dbReference>
<dbReference type="Gene3D" id="3.90.650.10">
    <property type="entry name" value="PurM-like C-terminal domain"/>
    <property type="match status" value="1"/>
</dbReference>
<dbReference type="Gene3D" id="3.30.1330.10">
    <property type="entry name" value="PurM-like, N-terminal domain"/>
    <property type="match status" value="1"/>
</dbReference>
<dbReference type="HAMAP" id="MF_00741">
    <property type="entry name" value="AIRS"/>
    <property type="match status" value="1"/>
</dbReference>
<dbReference type="InterPro" id="IPR010918">
    <property type="entry name" value="PurM-like_C_dom"/>
</dbReference>
<dbReference type="InterPro" id="IPR036676">
    <property type="entry name" value="PurM-like_C_sf"/>
</dbReference>
<dbReference type="InterPro" id="IPR016188">
    <property type="entry name" value="PurM-like_N"/>
</dbReference>
<dbReference type="InterPro" id="IPR036921">
    <property type="entry name" value="PurM-like_N_sf"/>
</dbReference>
<dbReference type="InterPro" id="IPR004733">
    <property type="entry name" value="PurM_cligase"/>
</dbReference>
<dbReference type="NCBIfam" id="TIGR00878">
    <property type="entry name" value="purM"/>
    <property type="match status" value="1"/>
</dbReference>
<dbReference type="PANTHER" id="PTHR10520:SF12">
    <property type="entry name" value="TRIFUNCTIONAL PURINE BIOSYNTHETIC PROTEIN ADENOSINE-3"/>
    <property type="match status" value="1"/>
</dbReference>
<dbReference type="PANTHER" id="PTHR10520">
    <property type="entry name" value="TRIFUNCTIONAL PURINE BIOSYNTHETIC PROTEIN ADENOSINE-3-RELATED"/>
    <property type="match status" value="1"/>
</dbReference>
<dbReference type="Pfam" id="PF00586">
    <property type="entry name" value="AIRS"/>
    <property type="match status" value="1"/>
</dbReference>
<dbReference type="Pfam" id="PF02769">
    <property type="entry name" value="AIRS_C"/>
    <property type="match status" value="1"/>
</dbReference>
<dbReference type="SUPFAM" id="SSF56042">
    <property type="entry name" value="PurM C-terminal domain-like"/>
    <property type="match status" value="1"/>
</dbReference>
<dbReference type="SUPFAM" id="SSF55326">
    <property type="entry name" value="PurM N-terminal domain-like"/>
    <property type="match status" value="1"/>
</dbReference>
<comment type="catalytic activity">
    <reaction evidence="1">
        <text>2-formamido-N(1)-(5-O-phospho-beta-D-ribosyl)acetamidine + ATP = 5-amino-1-(5-phospho-beta-D-ribosyl)imidazole + ADP + phosphate + H(+)</text>
        <dbReference type="Rhea" id="RHEA:23032"/>
        <dbReference type="ChEBI" id="CHEBI:15378"/>
        <dbReference type="ChEBI" id="CHEBI:30616"/>
        <dbReference type="ChEBI" id="CHEBI:43474"/>
        <dbReference type="ChEBI" id="CHEBI:137981"/>
        <dbReference type="ChEBI" id="CHEBI:147287"/>
        <dbReference type="ChEBI" id="CHEBI:456216"/>
        <dbReference type="EC" id="6.3.3.1"/>
    </reaction>
</comment>
<comment type="pathway">
    <text evidence="1">Purine metabolism; IMP biosynthesis via de novo pathway; 5-amino-1-(5-phospho-D-ribosyl)imidazole from N(2)-formyl-N(1)-(5-phospho-D-ribosyl)glycinamide: step 2/2.</text>
</comment>
<comment type="subcellular location">
    <subcellularLocation>
        <location evidence="1">Cytoplasm</location>
    </subcellularLocation>
</comment>
<comment type="similarity">
    <text evidence="1">Belongs to the AIR synthase family.</text>
</comment>
<accession>Q1JJ82</accession>